<reference key="1">
    <citation type="journal article" date="2006" name="BMC Genomics">
        <title>The genome of the square archaeon Haloquadratum walsbyi: life at the limits of water activity.</title>
        <authorList>
            <person name="Bolhuis H."/>
            <person name="Palm P."/>
            <person name="Wende A."/>
            <person name="Falb M."/>
            <person name="Rampp M."/>
            <person name="Rodriguez-Valera F."/>
            <person name="Pfeiffer F."/>
            <person name="Oesterhelt D."/>
        </authorList>
    </citation>
    <scope>NUCLEOTIDE SEQUENCE [LARGE SCALE GENOMIC DNA]</scope>
    <source>
        <strain>DSM 16790 / HBSQ001</strain>
    </source>
</reference>
<accession>Q18K08</accession>
<feature type="chain" id="PRO_1000021785" description="Proteasome subunit alpha">
    <location>
        <begin position="1"/>
        <end position="250"/>
    </location>
</feature>
<name>PSA_HALWD</name>
<protein>
    <recommendedName>
        <fullName evidence="1">Proteasome subunit alpha</fullName>
    </recommendedName>
    <alternativeName>
        <fullName evidence="1">20S proteasome alpha subunit</fullName>
    </alternativeName>
    <alternativeName>
        <fullName evidence="1">Proteasome core protein PsmA</fullName>
    </alternativeName>
</protein>
<proteinExistence type="inferred from homology"/>
<sequence length="250" mass="27225">MQGQAQQQAYDRGITIFSPDGRLYQVEYAREAVKRGTASVGIRTPDGIVLAADKRSRSPLMEPTSVEKIHKTDDHVGIASAGHVADARQLIDFARRQAQVNRLRYGEPVGIETLTKNVTDNIQQYTQVGGARPFGVALLIGGIEDGSPRLYETDPSGTPYEWKAVSIGADRSDLQEHLEENYTEELSLDEGVGLALRTIAISNDDELTAAGVDVATVASDTEEFIELTNDEISAYIADNDLEPAEETDSE</sequence>
<dbReference type="EMBL" id="AM180088">
    <property type="protein sequence ID" value="CAJ51644.1"/>
    <property type="molecule type" value="Genomic_DNA"/>
</dbReference>
<dbReference type="RefSeq" id="WP_011570798.1">
    <property type="nucleotide sequence ID" value="NC_008212.1"/>
</dbReference>
<dbReference type="SMR" id="Q18K08"/>
<dbReference type="STRING" id="362976.HQ_1516A"/>
<dbReference type="GeneID" id="4194514"/>
<dbReference type="KEGG" id="hwa:HQ_1516A"/>
<dbReference type="eggNOG" id="arCOG00971">
    <property type="taxonomic scope" value="Archaea"/>
</dbReference>
<dbReference type="HOGENOM" id="CLU_035750_4_1_2"/>
<dbReference type="Proteomes" id="UP000001975">
    <property type="component" value="Chromosome"/>
</dbReference>
<dbReference type="GO" id="GO:0005737">
    <property type="term" value="C:cytoplasm"/>
    <property type="evidence" value="ECO:0007669"/>
    <property type="project" value="UniProtKB-SubCell"/>
</dbReference>
<dbReference type="GO" id="GO:0019773">
    <property type="term" value="C:proteasome core complex, alpha-subunit complex"/>
    <property type="evidence" value="ECO:0000250"/>
    <property type="project" value="UniProtKB"/>
</dbReference>
<dbReference type="GO" id="GO:0004298">
    <property type="term" value="F:threonine-type endopeptidase activity"/>
    <property type="evidence" value="ECO:0007669"/>
    <property type="project" value="InterPro"/>
</dbReference>
<dbReference type="GO" id="GO:0010498">
    <property type="term" value="P:proteasomal protein catabolic process"/>
    <property type="evidence" value="ECO:0007669"/>
    <property type="project" value="UniProtKB-UniRule"/>
</dbReference>
<dbReference type="GO" id="GO:0006511">
    <property type="term" value="P:ubiquitin-dependent protein catabolic process"/>
    <property type="evidence" value="ECO:0007669"/>
    <property type="project" value="InterPro"/>
</dbReference>
<dbReference type="CDD" id="cd03756">
    <property type="entry name" value="proteasome_alpha_archeal"/>
    <property type="match status" value="1"/>
</dbReference>
<dbReference type="FunFam" id="3.60.20.10:FF:000004">
    <property type="entry name" value="Proteasome subunit alpha type-4"/>
    <property type="match status" value="1"/>
</dbReference>
<dbReference type="Gene3D" id="3.60.20.10">
    <property type="entry name" value="Glutamine Phosphoribosylpyrophosphate, subunit 1, domain 1"/>
    <property type="match status" value="1"/>
</dbReference>
<dbReference type="HAMAP" id="MF_00289_A">
    <property type="entry name" value="Proteasome_A_A"/>
    <property type="match status" value="1"/>
</dbReference>
<dbReference type="InterPro" id="IPR029055">
    <property type="entry name" value="Ntn_hydrolases_N"/>
</dbReference>
<dbReference type="InterPro" id="IPR050115">
    <property type="entry name" value="Proteasome_alpha"/>
</dbReference>
<dbReference type="InterPro" id="IPR023332">
    <property type="entry name" value="Proteasome_alpha-type"/>
</dbReference>
<dbReference type="InterPro" id="IPR019982">
    <property type="entry name" value="Proteasome_asu_arc"/>
</dbReference>
<dbReference type="InterPro" id="IPR000426">
    <property type="entry name" value="Proteasome_asu_N"/>
</dbReference>
<dbReference type="InterPro" id="IPR001353">
    <property type="entry name" value="Proteasome_sua/b"/>
</dbReference>
<dbReference type="NCBIfam" id="TIGR03633">
    <property type="entry name" value="arc_protsome_A"/>
    <property type="match status" value="1"/>
</dbReference>
<dbReference type="NCBIfam" id="NF003075">
    <property type="entry name" value="PRK03996.1"/>
    <property type="match status" value="1"/>
</dbReference>
<dbReference type="PANTHER" id="PTHR11599">
    <property type="entry name" value="PROTEASOME SUBUNIT ALPHA/BETA"/>
    <property type="match status" value="1"/>
</dbReference>
<dbReference type="Pfam" id="PF00227">
    <property type="entry name" value="Proteasome"/>
    <property type="match status" value="1"/>
</dbReference>
<dbReference type="Pfam" id="PF10584">
    <property type="entry name" value="Proteasome_A_N"/>
    <property type="match status" value="1"/>
</dbReference>
<dbReference type="SMART" id="SM00948">
    <property type="entry name" value="Proteasome_A_N"/>
    <property type="match status" value="1"/>
</dbReference>
<dbReference type="SUPFAM" id="SSF56235">
    <property type="entry name" value="N-terminal nucleophile aminohydrolases (Ntn hydrolases)"/>
    <property type="match status" value="1"/>
</dbReference>
<dbReference type="PROSITE" id="PS00388">
    <property type="entry name" value="PROTEASOME_ALPHA_1"/>
    <property type="match status" value="1"/>
</dbReference>
<dbReference type="PROSITE" id="PS51475">
    <property type="entry name" value="PROTEASOME_ALPHA_2"/>
    <property type="match status" value="1"/>
</dbReference>
<comment type="function">
    <text evidence="1">Component of the proteasome core, a large protease complex with broad specificity involved in protein degradation.</text>
</comment>
<comment type="activity regulation">
    <text evidence="1">The formation of the proteasomal ATPase PAN-20S proteasome complex, via the docking of the C-termini of PAN into the intersubunit pockets in the alpha-rings, triggers opening of the gate for substrate entry. Interconversion between the open-gate and close-gate conformations leads to a dynamic regulation of the 20S proteasome proteolysis activity.</text>
</comment>
<comment type="subunit">
    <text evidence="1">The 20S proteasome core is composed of 14 alpha and 14 beta subunits that assemble into four stacked heptameric rings, resulting in a barrel-shaped structure. The two inner rings, each composed of seven catalytic beta subunits, are sandwiched by two outer rings, each composed of seven alpha subunits. The catalytic chamber with the active sites is on the inside of the barrel. Has a gated structure, the ends of the cylinder being occluded by the N-termini of the alpha-subunits. Is capped at one or both ends by the proteasome regulatory ATPase, PAN.</text>
</comment>
<comment type="subcellular location">
    <subcellularLocation>
        <location evidence="1">Cytoplasm</location>
    </subcellularLocation>
</comment>
<comment type="similarity">
    <text evidence="1">Belongs to the peptidase T1A family.</text>
</comment>
<organism>
    <name type="scientific">Haloquadratum walsbyi (strain DSM 16790 / HBSQ001)</name>
    <dbReference type="NCBI Taxonomy" id="362976"/>
    <lineage>
        <taxon>Archaea</taxon>
        <taxon>Methanobacteriati</taxon>
        <taxon>Methanobacteriota</taxon>
        <taxon>Stenosarchaea group</taxon>
        <taxon>Halobacteria</taxon>
        <taxon>Halobacteriales</taxon>
        <taxon>Haloferacaceae</taxon>
        <taxon>Haloquadratum</taxon>
    </lineage>
</organism>
<keyword id="KW-0963">Cytoplasm</keyword>
<keyword id="KW-0647">Proteasome</keyword>
<keyword id="KW-1185">Reference proteome</keyword>
<evidence type="ECO:0000255" key="1">
    <source>
        <dbReference type="HAMAP-Rule" id="MF_00289"/>
    </source>
</evidence>
<gene>
    <name evidence="1" type="primary">psmA</name>
    <name type="ordered locus">HQ_1516A</name>
</gene>